<comment type="function">
    <text evidence="1">Catalyzes the methylthiolation of an aspartic acid residue of ribosomal protein uS12.</text>
</comment>
<comment type="catalytic activity">
    <reaction evidence="1">
        <text>L-aspartate(89)-[ribosomal protein uS12]-hydrogen + (sulfur carrier)-SH + AH2 + 2 S-adenosyl-L-methionine = 3-methylsulfanyl-L-aspartate(89)-[ribosomal protein uS12]-hydrogen + (sulfur carrier)-H + 5'-deoxyadenosine + L-methionine + A + S-adenosyl-L-homocysteine + 2 H(+)</text>
        <dbReference type="Rhea" id="RHEA:37087"/>
        <dbReference type="Rhea" id="RHEA-COMP:10460"/>
        <dbReference type="Rhea" id="RHEA-COMP:10461"/>
        <dbReference type="Rhea" id="RHEA-COMP:14737"/>
        <dbReference type="Rhea" id="RHEA-COMP:14739"/>
        <dbReference type="ChEBI" id="CHEBI:13193"/>
        <dbReference type="ChEBI" id="CHEBI:15378"/>
        <dbReference type="ChEBI" id="CHEBI:17319"/>
        <dbReference type="ChEBI" id="CHEBI:17499"/>
        <dbReference type="ChEBI" id="CHEBI:29917"/>
        <dbReference type="ChEBI" id="CHEBI:29961"/>
        <dbReference type="ChEBI" id="CHEBI:57844"/>
        <dbReference type="ChEBI" id="CHEBI:57856"/>
        <dbReference type="ChEBI" id="CHEBI:59789"/>
        <dbReference type="ChEBI" id="CHEBI:64428"/>
        <dbReference type="ChEBI" id="CHEBI:73599"/>
        <dbReference type="EC" id="2.8.4.4"/>
    </reaction>
</comment>
<comment type="cofactor">
    <cofactor evidence="1">
        <name>[4Fe-4S] cluster</name>
        <dbReference type="ChEBI" id="CHEBI:49883"/>
    </cofactor>
    <text evidence="1">Binds 2 [4Fe-4S] clusters. One cluster is coordinated with 3 cysteines and an exchangeable S-adenosyl-L-methionine.</text>
</comment>
<comment type="subcellular location">
    <subcellularLocation>
        <location evidence="1">Cytoplasm</location>
    </subcellularLocation>
</comment>
<comment type="similarity">
    <text evidence="1">Belongs to the methylthiotransferase family. RimO subfamily.</text>
</comment>
<accession>Q0HZF3</accession>
<keyword id="KW-0004">4Fe-4S</keyword>
<keyword id="KW-0963">Cytoplasm</keyword>
<keyword id="KW-0408">Iron</keyword>
<keyword id="KW-0411">Iron-sulfur</keyword>
<keyword id="KW-0479">Metal-binding</keyword>
<keyword id="KW-0949">S-adenosyl-L-methionine</keyword>
<keyword id="KW-0808">Transferase</keyword>
<protein>
    <recommendedName>
        <fullName evidence="1">Ribosomal protein uS12 methylthiotransferase RimO</fullName>
        <shortName evidence="1">uS12 MTTase</shortName>
        <shortName evidence="1">uS12 methylthiotransferase</shortName>
        <ecNumber evidence="1">2.8.4.4</ecNumber>
    </recommendedName>
    <alternativeName>
        <fullName evidence="1">Ribosomal protein uS12 (aspartate-C(3))-methylthiotransferase</fullName>
    </alternativeName>
    <alternativeName>
        <fullName evidence="1">Ribosome maturation factor RimO</fullName>
    </alternativeName>
</protein>
<evidence type="ECO:0000255" key="1">
    <source>
        <dbReference type="HAMAP-Rule" id="MF_01865"/>
    </source>
</evidence>
<evidence type="ECO:0000255" key="2">
    <source>
        <dbReference type="PROSITE-ProRule" id="PRU01266"/>
    </source>
</evidence>
<feature type="chain" id="PRO_0000375007" description="Ribosomal protein uS12 methylthiotransferase RimO">
    <location>
        <begin position="1"/>
        <end position="476"/>
    </location>
</feature>
<feature type="domain" description="MTTase N-terminal" evidence="1">
    <location>
        <begin position="33"/>
        <end position="143"/>
    </location>
</feature>
<feature type="domain" description="Radical SAM core" evidence="2">
    <location>
        <begin position="161"/>
        <end position="398"/>
    </location>
</feature>
<feature type="domain" description="TRAM" evidence="1">
    <location>
        <begin position="401"/>
        <end position="467"/>
    </location>
</feature>
<feature type="binding site" evidence="1">
    <location>
        <position position="42"/>
    </location>
    <ligand>
        <name>[4Fe-4S] cluster</name>
        <dbReference type="ChEBI" id="CHEBI:49883"/>
        <label>1</label>
    </ligand>
</feature>
<feature type="binding site" evidence="1">
    <location>
        <position position="78"/>
    </location>
    <ligand>
        <name>[4Fe-4S] cluster</name>
        <dbReference type="ChEBI" id="CHEBI:49883"/>
        <label>1</label>
    </ligand>
</feature>
<feature type="binding site" evidence="1">
    <location>
        <position position="107"/>
    </location>
    <ligand>
        <name>[4Fe-4S] cluster</name>
        <dbReference type="ChEBI" id="CHEBI:49883"/>
        <label>1</label>
    </ligand>
</feature>
<feature type="binding site" evidence="1">
    <location>
        <position position="175"/>
    </location>
    <ligand>
        <name>[4Fe-4S] cluster</name>
        <dbReference type="ChEBI" id="CHEBI:49883"/>
        <label>2</label>
        <note>4Fe-4S-S-AdoMet</note>
    </ligand>
</feature>
<feature type="binding site" evidence="1">
    <location>
        <position position="179"/>
    </location>
    <ligand>
        <name>[4Fe-4S] cluster</name>
        <dbReference type="ChEBI" id="CHEBI:49883"/>
        <label>2</label>
        <note>4Fe-4S-S-AdoMet</note>
    </ligand>
</feature>
<feature type="binding site" evidence="1">
    <location>
        <position position="182"/>
    </location>
    <ligand>
        <name>[4Fe-4S] cluster</name>
        <dbReference type="ChEBI" id="CHEBI:49883"/>
        <label>2</label>
        <note>4Fe-4S-S-AdoMet</note>
    </ligand>
</feature>
<gene>
    <name evidence="1" type="primary">rimO</name>
    <name type="ordered locus">Shewmr7_0499</name>
</gene>
<sequence>MTVETFNPKQTTTLETPAKTLEAASADSTATGNRIGFVSLGCPKNLVDSERILTQLRIDGYEVTNSYDNADLVIVNTCGFIDAAVEESLDAVREALEENGKVIVTGCLGAKENQIREVHPDVLEITGPHSYEAVLKHVHKYVPKPEHNPFTSLIPQTGVKLTPKHYAYLKISEGCDNRCTFCIIPALRGDLDSRPAGSVLDEAKRLVESGVQEILVVSQDTSAYGKDKGGRTDFWNGMPVKQDITSLARQLGKMGAWVRLHYIYPYPWVDDLIPLMAEGLILPYLDIPMQHASPRILKMMKRPGRVDRQLEAIQRWREICPDLVIRSTFIVGFPGETEEDFEMLLDFLREARLDRVGCFKYSEVEGAVANTIAELISEDVKEDRYHRFMEVQAEISAERLARFVGRTMDILIDDVDEEGAIGRSFADAPEIDGMVFINGETELEPGMLVRAVITHSDEHDLWAELVDADAEDDIEA</sequence>
<organism>
    <name type="scientific">Shewanella sp. (strain MR-7)</name>
    <dbReference type="NCBI Taxonomy" id="60481"/>
    <lineage>
        <taxon>Bacteria</taxon>
        <taxon>Pseudomonadati</taxon>
        <taxon>Pseudomonadota</taxon>
        <taxon>Gammaproteobacteria</taxon>
        <taxon>Alteromonadales</taxon>
        <taxon>Shewanellaceae</taxon>
        <taxon>Shewanella</taxon>
    </lineage>
</organism>
<name>RIMO_SHESR</name>
<dbReference type="EC" id="2.8.4.4" evidence="1"/>
<dbReference type="EMBL" id="CP000444">
    <property type="protein sequence ID" value="ABI41502.1"/>
    <property type="molecule type" value="Genomic_DNA"/>
</dbReference>
<dbReference type="SMR" id="Q0HZF3"/>
<dbReference type="KEGG" id="shm:Shewmr7_0499"/>
<dbReference type="HOGENOM" id="CLU_018697_0_0_6"/>
<dbReference type="GO" id="GO:0005829">
    <property type="term" value="C:cytosol"/>
    <property type="evidence" value="ECO:0007669"/>
    <property type="project" value="TreeGrafter"/>
</dbReference>
<dbReference type="GO" id="GO:0051539">
    <property type="term" value="F:4 iron, 4 sulfur cluster binding"/>
    <property type="evidence" value="ECO:0007669"/>
    <property type="project" value="UniProtKB-UniRule"/>
</dbReference>
<dbReference type="GO" id="GO:0035599">
    <property type="term" value="F:aspartic acid methylthiotransferase activity"/>
    <property type="evidence" value="ECO:0007669"/>
    <property type="project" value="TreeGrafter"/>
</dbReference>
<dbReference type="GO" id="GO:0046872">
    <property type="term" value="F:metal ion binding"/>
    <property type="evidence" value="ECO:0007669"/>
    <property type="project" value="UniProtKB-KW"/>
</dbReference>
<dbReference type="GO" id="GO:0103039">
    <property type="term" value="F:protein methylthiotransferase activity"/>
    <property type="evidence" value="ECO:0007669"/>
    <property type="project" value="UniProtKB-EC"/>
</dbReference>
<dbReference type="GO" id="GO:0006400">
    <property type="term" value="P:tRNA modification"/>
    <property type="evidence" value="ECO:0007669"/>
    <property type="project" value="InterPro"/>
</dbReference>
<dbReference type="CDD" id="cd01335">
    <property type="entry name" value="Radical_SAM"/>
    <property type="match status" value="1"/>
</dbReference>
<dbReference type="FunFam" id="2.40.50.140:FF:000060">
    <property type="entry name" value="Ribosomal protein S12 methylthiotransferase RimO"/>
    <property type="match status" value="1"/>
</dbReference>
<dbReference type="FunFam" id="3.40.50.12160:FF:000002">
    <property type="entry name" value="Ribosomal protein S12 methylthiotransferase RimO"/>
    <property type="match status" value="1"/>
</dbReference>
<dbReference type="FunFam" id="3.80.30.20:FF:000001">
    <property type="entry name" value="tRNA-2-methylthio-N(6)-dimethylallyladenosine synthase 2"/>
    <property type="match status" value="1"/>
</dbReference>
<dbReference type="Gene3D" id="3.40.50.12160">
    <property type="entry name" value="Methylthiotransferase, N-terminal domain"/>
    <property type="match status" value="1"/>
</dbReference>
<dbReference type="Gene3D" id="2.40.50.140">
    <property type="entry name" value="Nucleic acid-binding proteins"/>
    <property type="match status" value="1"/>
</dbReference>
<dbReference type="Gene3D" id="3.80.30.20">
    <property type="entry name" value="tm_1862 like domain"/>
    <property type="match status" value="1"/>
</dbReference>
<dbReference type="HAMAP" id="MF_01865">
    <property type="entry name" value="MTTase_RimO"/>
    <property type="match status" value="1"/>
</dbReference>
<dbReference type="InterPro" id="IPR006638">
    <property type="entry name" value="Elp3/MiaA/NifB-like_rSAM"/>
</dbReference>
<dbReference type="InterPro" id="IPR005839">
    <property type="entry name" value="Methylthiotransferase"/>
</dbReference>
<dbReference type="InterPro" id="IPR020612">
    <property type="entry name" value="Methylthiotransferase_CS"/>
</dbReference>
<dbReference type="InterPro" id="IPR013848">
    <property type="entry name" value="Methylthiotransferase_N"/>
</dbReference>
<dbReference type="InterPro" id="IPR038135">
    <property type="entry name" value="Methylthiotransferase_N_sf"/>
</dbReference>
<dbReference type="InterPro" id="IPR012340">
    <property type="entry name" value="NA-bd_OB-fold"/>
</dbReference>
<dbReference type="InterPro" id="IPR005840">
    <property type="entry name" value="Ribosomal_uS12_MeSTrfase_RimO"/>
</dbReference>
<dbReference type="InterPro" id="IPR007197">
    <property type="entry name" value="rSAM"/>
</dbReference>
<dbReference type="InterPro" id="IPR023404">
    <property type="entry name" value="rSAM_horseshoe"/>
</dbReference>
<dbReference type="InterPro" id="IPR002792">
    <property type="entry name" value="TRAM_dom"/>
</dbReference>
<dbReference type="NCBIfam" id="TIGR01125">
    <property type="entry name" value="30S ribosomal protein S12 methylthiotransferase RimO"/>
    <property type="match status" value="1"/>
</dbReference>
<dbReference type="NCBIfam" id="TIGR00089">
    <property type="entry name" value="MiaB/RimO family radical SAM methylthiotransferase"/>
    <property type="match status" value="1"/>
</dbReference>
<dbReference type="PANTHER" id="PTHR43837">
    <property type="entry name" value="RIBOSOMAL PROTEIN S12 METHYLTHIOTRANSFERASE RIMO"/>
    <property type="match status" value="1"/>
</dbReference>
<dbReference type="PANTHER" id="PTHR43837:SF1">
    <property type="entry name" value="RIBOSOMAL PROTEIN US12 METHYLTHIOTRANSFERASE RIMO"/>
    <property type="match status" value="1"/>
</dbReference>
<dbReference type="Pfam" id="PF04055">
    <property type="entry name" value="Radical_SAM"/>
    <property type="match status" value="1"/>
</dbReference>
<dbReference type="Pfam" id="PF18693">
    <property type="entry name" value="TRAM_2"/>
    <property type="match status" value="1"/>
</dbReference>
<dbReference type="Pfam" id="PF00919">
    <property type="entry name" value="UPF0004"/>
    <property type="match status" value="1"/>
</dbReference>
<dbReference type="SFLD" id="SFLDG01082">
    <property type="entry name" value="B12-binding_domain_containing"/>
    <property type="match status" value="1"/>
</dbReference>
<dbReference type="SFLD" id="SFLDG01061">
    <property type="entry name" value="methylthiotransferase"/>
    <property type="match status" value="1"/>
</dbReference>
<dbReference type="SFLD" id="SFLDF00274">
    <property type="entry name" value="ribosomal_protein_S12_methylth"/>
    <property type="match status" value="1"/>
</dbReference>
<dbReference type="SMART" id="SM00729">
    <property type="entry name" value="Elp3"/>
    <property type="match status" value="1"/>
</dbReference>
<dbReference type="SUPFAM" id="SSF102114">
    <property type="entry name" value="Radical SAM enzymes"/>
    <property type="match status" value="1"/>
</dbReference>
<dbReference type="PROSITE" id="PS51449">
    <property type="entry name" value="MTTASE_N"/>
    <property type="match status" value="1"/>
</dbReference>
<dbReference type="PROSITE" id="PS01278">
    <property type="entry name" value="MTTASE_RADICAL"/>
    <property type="match status" value="1"/>
</dbReference>
<dbReference type="PROSITE" id="PS51918">
    <property type="entry name" value="RADICAL_SAM"/>
    <property type="match status" value="1"/>
</dbReference>
<dbReference type="PROSITE" id="PS50926">
    <property type="entry name" value="TRAM"/>
    <property type="match status" value="1"/>
</dbReference>
<reference key="1">
    <citation type="submission" date="2006-08" db="EMBL/GenBank/DDBJ databases">
        <title>Complete sequence of chromosome 1 of Shewanella sp. MR-7.</title>
        <authorList>
            <person name="Copeland A."/>
            <person name="Lucas S."/>
            <person name="Lapidus A."/>
            <person name="Barry K."/>
            <person name="Detter J.C."/>
            <person name="Glavina del Rio T."/>
            <person name="Hammon N."/>
            <person name="Israni S."/>
            <person name="Dalin E."/>
            <person name="Tice H."/>
            <person name="Pitluck S."/>
            <person name="Kiss H."/>
            <person name="Brettin T."/>
            <person name="Bruce D."/>
            <person name="Han C."/>
            <person name="Tapia R."/>
            <person name="Gilna P."/>
            <person name="Schmutz J."/>
            <person name="Larimer F."/>
            <person name="Land M."/>
            <person name="Hauser L."/>
            <person name="Kyrpides N."/>
            <person name="Mikhailova N."/>
            <person name="Nealson K."/>
            <person name="Konstantinidis K."/>
            <person name="Klappenbach J."/>
            <person name="Tiedje J."/>
            <person name="Richardson P."/>
        </authorList>
    </citation>
    <scope>NUCLEOTIDE SEQUENCE [LARGE SCALE GENOMIC DNA]</scope>
    <source>
        <strain>MR-7</strain>
    </source>
</reference>
<proteinExistence type="inferred from homology"/>